<gene>
    <name evidence="5" type="primary">alnH</name>
    <name type="ORF">ANIA_11192</name>
</gene>
<feature type="chain" id="PRO_0000445943" description="Cytochrome P450 monooxygenase alnH">
    <location>
        <begin position="1"/>
        <end position="546"/>
    </location>
</feature>
<feature type="transmembrane region" description="Helical" evidence="2">
    <location>
        <begin position="11"/>
        <end position="31"/>
    </location>
</feature>
<feature type="binding site" description="axial binding residue" evidence="1">
    <location>
        <position position="445"/>
    </location>
    <ligand>
        <name>heme</name>
        <dbReference type="ChEBI" id="CHEBI:30413"/>
    </ligand>
    <ligandPart>
        <name>Fe</name>
        <dbReference type="ChEBI" id="CHEBI:18248"/>
    </ligandPart>
</feature>
<feature type="glycosylation site" description="N-linked (GlcNAc...) asparagine" evidence="3">
    <location>
        <position position="146"/>
    </location>
</feature>
<feature type="glycosylation site" description="N-linked (GlcNAc...) asparagine" evidence="3">
    <location>
        <position position="258"/>
    </location>
</feature>
<feature type="glycosylation site" description="N-linked (GlcNAc...) asparagine" evidence="3">
    <location>
        <position position="425"/>
    </location>
</feature>
<comment type="function">
    <text evidence="4">Cytochrome P450 monooxygenase; part of the gene cluster that mediates the biosynthesis of asperlin, a polyketide showing anti-inflammatory, antitumor and antibiotic activities (PubMed:30339758). The first step of the asperlin biosynthesis is the production of the intermediate 2,4,6-octatrienoic acid by the highly redusing polyketide synthase alnA with cleavage of the PKS product by the esterase alnB (PubMed:30339758). 2,4,6-octatrienoic acid is further converted to asperlin via several steps involving the remaining enzymes from the cluster (PubMed:30339758).</text>
</comment>
<comment type="cofactor">
    <cofactor evidence="1">
        <name>heme</name>
        <dbReference type="ChEBI" id="CHEBI:30413"/>
    </cofactor>
</comment>
<comment type="pathway">
    <text evidence="4">Polyketide biosynthesis.</text>
</comment>
<comment type="subcellular location">
    <subcellularLocation>
        <location evidence="2">Membrane</location>
        <topology evidence="2">Single-pass membrane protein</topology>
    </subcellularLocation>
</comment>
<comment type="induction">
    <text evidence="4">Expression is controlled by the asperlin biosynthesis cluster-specific transcription factor alnR.</text>
</comment>
<comment type="disruption phenotype">
    <text evidence="4">Fully eliminates the production of asperlin.</text>
</comment>
<comment type="similarity">
    <text evidence="6">Belongs to the cytochrome P450 family.</text>
</comment>
<reference key="1">
    <citation type="journal article" date="2005" name="Nature">
        <title>Sequencing of Aspergillus nidulans and comparative analysis with A. fumigatus and A. oryzae.</title>
        <authorList>
            <person name="Galagan J.E."/>
            <person name="Calvo S.E."/>
            <person name="Cuomo C."/>
            <person name="Ma L.-J."/>
            <person name="Wortman J.R."/>
            <person name="Batzoglou S."/>
            <person name="Lee S.-I."/>
            <person name="Bastuerkmen M."/>
            <person name="Spevak C.C."/>
            <person name="Clutterbuck J."/>
            <person name="Kapitonov V."/>
            <person name="Jurka J."/>
            <person name="Scazzocchio C."/>
            <person name="Farman M.L."/>
            <person name="Butler J."/>
            <person name="Purcell S."/>
            <person name="Harris S."/>
            <person name="Braus G.H."/>
            <person name="Draht O."/>
            <person name="Busch S."/>
            <person name="D'Enfert C."/>
            <person name="Bouchier C."/>
            <person name="Goldman G.H."/>
            <person name="Bell-Pedersen D."/>
            <person name="Griffiths-Jones S."/>
            <person name="Doonan J.H."/>
            <person name="Yu J."/>
            <person name="Vienken K."/>
            <person name="Pain A."/>
            <person name="Freitag M."/>
            <person name="Selker E.U."/>
            <person name="Archer D.B."/>
            <person name="Penalva M.A."/>
            <person name="Oakley B.R."/>
            <person name="Momany M."/>
            <person name="Tanaka T."/>
            <person name="Kumagai T."/>
            <person name="Asai K."/>
            <person name="Machida M."/>
            <person name="Nierman W.C."/>
            <person name="Denning D.W."/>
            <person name="Caddick M.X."/>
            <person name="Hynes M."/>
            <person name="Paoletti M."/>
            <person name="Fischer R."/>
            <person name="Miller B.L."/>
            <person name="Dyer P.S."/>
            <person name="Sachs M.S."/>
            <person name="Osmani S.A."/>
            <person name="Birren B.W."/>
        </authorList>
    </citation>
    <scope>NUCLEOTIDE SEQUENCE [LARGE SCALE GENOMIC DNA]</scope>
    <source>
        <strain>FGSC A4 / ATCC 38163 / CBS 112.46 / NRRL 194 / M139</strain>
    </source>
</reference>
<reference key="2">
    <citation type="journal article" date="2009" name="Fungal Genet. Biol.">
        <title>The 2008 update of the Aspergillus nidulans genome annotation: a community effort.</title>
        <authorList>
            <person name="Wortman J.R."/>
            <person name="Gilsenan J.M."/>
            <person name="Joardar V."/>
            <person name="Deegan J."/>
            <person name="Clutterbuck J."/>
            <person name="Andersen M.R."/>
            <person name="Archer D."/>
            <person name="Bencina M."/>
            <person name="Braus G."/>
            <person name="Coutinho P."/>
            <person name="von Dohren H."/>
            <person name="Doonan J."/>
            <person name="Driessen A.J."/>
            <person name="Durek P."/>
            <person name="Espeso E."/>
            <person name="Fekete E."/>
            <person name="Flipphi M."/>
            <person name="Estrada C.G."/>
            <person name="Geysens S."/>
            <person name="Goldman G."/>
            <person name="de Groot P.W."/>
            <person name="Hansen K."/>
            <person name="Harris S.D."/>
            <person name="Heinekamp T."/>
            <person name="Helmstaedt K."/>
            <person name="Henrissat B."/>
            <person name="Hofmann G."/>
            <person name="Homan T."/>
            <person name="Horio T."/>
            <person name="Horiuchi H."/>
            <person name="James S."/>
            <person name="Jones M."/>
            <person name="Karaffa L."/>
            <person name="Karanyi Z."/>
            <person name="Kato M."/>
            <person name="Keller N."/>
            <person name="Kelly D.E."/>
            <person name="Kiel J.A."/>
            <person name="Kim J.M."/>
            <person name="van der Klei I.J."/>
            <person name="Klis F.M."/>
            <person name="Kovalchuk A."/>
            <person name="Krasevec N."/>
            <person name="Kubicek C.P."/>
            <person name="Liu B."/>
            <person name="Maccabe A."/>
            <person name="Meyer V."/>
            <person name="Mirabito P."/>
            <person name="Miskei M."/>
            <person name="Mos M."/>
            <person name="Mullins J."/>
            <person name="Nelson D.R."/>
            <person name="Nielsen J."/>
            <person name="Oakley B.R."/>
            <person name="Osmani S.A."/>
            <person name="Pakula T."/>
            <person name="Paszewski A."/>
            <person name="Paulsen I."/>
            <person name="Pilsyk S."/>
            <person name="Pocsi I."/>
            <person name="Punt P.J."/>
            <person name="Ram A.F."/>
            <person name="Ren Q."/>
            <person name="Robellet X."/>
            <person name="Robson G."/>
            <person name="Seiboth B."/>
            <person name="van Solingen P."/>
            <person name="Specht T."/>
            <person name="Sun J."/>
            <person name="Taheri-Talesh N."/>
            <person name="Takeshita N."/>
            <person name="Ussery D."/>
            <person name="vanKuyk P.A."/>
            <person name="Visser H."/>
            <person name="van de Vondervoort P.J."/>
            <person name="de Vries R.P."/>
            <person name="Walton J."/>
            <person name="Xiang X."/>
            <person name="Xiong Y."/>
            <person name="Zeng A.P."/>
            <person name="Brandt B.W."/>
            <person name="Cornell M.J."/>
            <person name="van den Hondel C.A."/>
            <person name="Visser J."/>
            <person name="Oliver S.G."/>
            <person name="Turner G."/>
        </authorList>
    </citation>
    <scope>GENOME REANNOTATION</scope>
    <source>
        <strain>FGSC A4 / ATCC 38163 / CBS 112.46 / NRRL 194 / M139</strain>
    </source>
</reference>
<reference key="3">
    <citation type="journal article" date="2018" name="ACS Chem. Biol.">
        <title>Hybrid transcription factor engineering activates the silent secondary metabolite gene cluster for (+)-asperlin in Aspergillus nidulans.</title>
        <authorList>
            <person name="Grau M.F."/>
            <person name="Entwistle R."/>
            <person name="Chiang Y.M."/>
            <person name="Ahuja M."/>
            <person name="Oakley C.E."/>
            <person name="Akashi T."/>
            <person name="Wang C.C.C."/>
            <person name="Todd R.B."/>
            <person name="Oakley B.R."/>
        </authorList>
    </citation>
    <scope>IDENTIFICATION</scope>
    <scope>DISRUPTION PHENOTYPE</scope>
    <scope>FUNCTION</scope>
    <scope>INDUCTION</scope>
    <scope>PATHWAY</scope>
</reference>
<dbReference type="EC" id="1.-.-.-" evidence="7"/>
<dbReference type="EMBL" id="BN001306">
    <property type="protein sequence ID" value="CBF82292.1"/>
    <property type="molecule type" value="Genomic_DNA"/>
</dbReference>
<dbReference type="RefSeq" id="XP_682491.1">
    <property type="nucleotide sequence ID" value="XM_677399.1"/>
</dbReference>
<dbReference type="SMR" id="C8VJR0"/>
<dbReference type="STRING" id="227321.C8VJR0"/>
<dbReference type="GlyCosmos" id="C8VJR0">
    <property type="glycosylation" value="3 sites, No reported glycans"/>
</dbReference>
<dbReference type="EnsemblFungi" id="CBF82292">
    <property type="protein sequence ID" value="CBF82292"/>
    <property type="gene ID" value="ANIA_11192"/>
</dbReference>
<dbReference type="GeneID" id="2868091"/>
<dbReference type="KEGG" id="ani:ANIA_11192"/>
<dbReference type="eggNOG" id="KOG0156">
    <property type="taxonomic scope" value="Eukaryota"/>
</dbReference>
<dbReference type="HOGENOM" id="CLU_001570_2_3_1"/>
<dbReference type="InParanoid" id="C8VJR0"/>
<dbReference type="OMA" id="QAIWGNL"/>
<dbReference type="OrthoDB" id="1103324at2759"/>
<dbReference type="Proteomes" id="UP000000560">
    <property type="component" value="Chromosome VI"/>
</dbReference>
<dbReference type="GO" id="GO:0016020">
    <property type="term" value="C:membrane"/>
    <property type="evidence" value="ECO:0007669"/>
    <property type="project" value="UniProtKB-SubCell"/>
</dbReference>
<dbReference type="GO" id="GO:0020037">
    <property type="term" value="F:heme binding"/>
    <property type="evidence" value="ECO:0007669"/>
    <property type="project" value="InterPro"/>
</dbReference>
<dbReference type="GO" id="GO:0005506">
    <property type="term" value="F:iron ion binding"/>
    <property type="evidence" value="ECO:0007669"/>
    <property type="project" value="InterPro"/>
</dbReference>
<dbReference type="GO" id="GO:0004497">
    <property type="term" value="F:monooxygenase activity"/>
    <property type="evidence" value="ECO:0007669"/>
    <property type="project" value="UniProtKB-KW"/>
</dbReference>
<dbReference type="GO" id="GO:0016705">
    <property type="term" value="F:oxidoreductase activity, acting on paired donors, with incorporation or reduction of molecular oxygen"/>
    <property type="evidence" value="ECO:0007669"/>
    <property type="project" value="InterPro"/>
</dbReference>
<dbReference type="CDD" id="cd11065">
    <property type="entry name" value="CYP64-like"/>
    <property type="match status" value="1"/>
</dbReference>
<dbReference type="Gene3D" id="1.10.630.10">
    <property type="entry name" value="Cytochrome P450"/>
    <property type="match status" value="1"/>
</dbReference>
<dbReference type="InterPro" id="IPR001128">
    <property type="entry name" value="Cyt_P450"/>
</dbReference>
<dbReference type="InterPro" id="IPR017972">
    <property type="entry name" value="Cyt_P450_CS"/>
</dbReference>
<dbReference type="InterPro" id="IPR002401">
    <property type="entry name" value="Cyt_P450_E_grp-I"/>
</dbReference>
<dbReference type="InterPro" id="IPR036396">
    <property type="entry name" value="Cyt_P450_sf"/>
</dbReference>
<dbReference type="InterPro" id="IPR050364">
    <property type="entry name" value="Cytochrome_P450_fung"/>
</dbReference>
<dbReference type="PANTHER" id="PTHR46300:SF2">
    <property type="entry name" value="CYTOCHROME P450 MONOOXYGENASE ALNH-RELATED"/>
    <property type="match status" value="1"/>
</dbReference>
<dbReference type="PANTHER" id="PTHR46300">
    <property type="entry name" value="P450, PUTATIVE (EUROFUNG)-RELATED-RELATED"/>
    <property type="match status" value="1"/>
</dbReference>
<dbReference type="Pfam" id="PF00067">
    <property type="entry name" value="p450"/>
    <property type="match status" value="1"/>
</dbReference>
<dbReference type="PRINTS" id="PR00463">
    <property type="entry name" value="EP450I"/>
</dbReference>
<dbReference type="SUPFAM" id="SSF48264">
    <property type="entry name" value="Cytochrome P450"/>
    <property type="match status" value="1"/>
</dbReference>
<dbReference type="PROSITE" id="PS00086">
    <property type="entry name" value="CYTOCHROME_P450"/>
    <property type="match status" value="1"/>
</dbReference>
<name>ALNH_EMENI</name>
<protein>
    <recommendedName>
        <fullName evidence="5">Cytochrome P450 monooxygenase alnH</fullName>
        <ecNumber evidence="7">1.-.-.-</ecNumber>
    </recommendedName>
    <alternativeName>
        <fullName evidence="5">Asperlin biosynthesis cluster protein HA</fullName>
    </alternativeName>
</protein>
<evidence type="ECO:0000250" key="1">
    <source>
        <dbReference type="UniProtKB" id="P04798"/>
    </source>
</evidence>
<evidence type="ECO:0000255" key="2"/>
<evidence type="ECO:0000255" key="3">
    <source>
        <dbReference type="PROSITE-ProRule" id="PRU00498"/>
    </source>
</evidence>
<evidence type="ECO:0000269" key="4">
    <source>
    </source>
</evidence>
<evidence type="ECO:0000303" key="5">
    <source>
    </source>
</evidence>
<evidence type="ECO:0000305" key="6"/>
<evidence type="ECO:0000305" key="7">
    <source>
    </source>
</evidence>
<keyword id="KW-0325">Glycoprotein</keyword>
<keyword id="KW-0349">Heme</keyword>
<keyword id="KW-0408">Iron</keyword>
<keyword id="KW-0472">Membrane</keyword>
<keyword id="KW-0479">Metal-binding</keyword>
<keyword id="KW-0503">Monooxygenase</keyword>
<keyword id="KW-0560">Oxidoreductase</keyword>
<keyword id="KW-1185">Reference proteome</keyword>
<keyword id="KW-0812">Transmembrane</keyword>
<keyword id="KW-1133">Transmembrane helix</keyword>
<proteinExistence type="evidence at transcript level"/>
<accession>C8VJR0</accession>
<sequence length="546" mass="62135">MTMAALDVFNVPYSVPLLGSTVVILIGFIAIKALRVGSRPKGLPPGPPTEFIWGNTKQIDLFYPQYQYRKWAQQYGPVYTVMLGDTAHVVVSGLRDVRDIFIKQGASSQNRPPSRFQLLMRDGFFPGLNNGEKWRQSRRMWQAVLNNSAAKQYLPYQELETRQLLFDLLRAPTEWRDHIERYSNSVAMTMVNGRRIIDAADPRVKETIQDLYDLAETGVRGAFLDSWPFLWKLPEWMFPVCRQARKIAAKHREYIWRNYSDVAKRTSQGEVLPSVNHAIQEKLKQGWPGVSEIEGAEIGHHLLTGTTDTTASTLINWVAAMCLHPEAQKKAQEEIDRVVGPNRLPTDADAANLPYVQQVIQEAQRWITAVPLSLPRAANAPVHWGKYTIPEETGLIMNSHALHNDPDIFPEPDKFKPERWEGKPNASSNGDAQLLFTFGAGRRVCPGQHLAERSLFLVISHWLWGFDTLQATDDDKNKIPIDKDDLRPGFIVCLNPFPAKITPRTAQHRELIERIWKEELEVSLDESQQWKATPEGIARLLERVGK</sequence>
<organism>
    <name type="scientific">Emericella nidulans (strain FGSC A4 / ATCC 38163 / CBS 112.46 / NRRL 194 / M139)</name>
    <name type="common">Aspergillus nidulans</name>
    <dbReference type="NCBI Taxonomy" id="227321"/>
    <lineage>
        <taxon>Eukaryota</taxon>
        <taxon>Fungi</taxon>
        <taxon>Dikarya</taxon>
        <taxon>Ascomycota</taxon>
        <taxon>Pezizomycotina</taxon>
        <taxon>Eurotiomycetes</taxon>
        <taxon>Eurotiomycetidae</taxon>
        <taxon>Eurotiales</taxon>
        <taxon>Aspergillaceae</taxon>
        <taxon>Aspergillus</taxon>
        <taxon>Aspergillus subgen. Nidulantes</taxon>
    </lineage>
</organism>